<accession>O27902</accession>
<proteinExistence type="inferred from homology"/>
<keyword id="KW-0489">Methyltransferase</keyword>
<keyword id="KW-1185">Reference proteome</keyword>
<keyword id="KW-0949">S-adenosyl-L-methionine</keyword>
<keyword id="KW-0808">Transferase</keyword>
<feature type="chain" id="PRO_0000156122" description="Diphthine synthase">
    <location>
        <begin position="1"/>
        <end position="264"/>
    </location>
</feature>
<feature type="binding site" evidence="1">
    <location>
        <position position="9"/>
    </location>
    <ligand>
        <name>S-adenosyl-L-methionine</name>
        <dbReference type="ChEBI" id="CHEBI:59789"/>
    </ligand>
</feature>
<feature type="binding site" evidence="1">
    <location>
        <position position="84"/>
    </location>
    <ligand>
        <name>S-adenosyl-L-methionine</name>
        <dbReference type="ChEBI" id="CHEBI:59789"/>
    </ligand>
</feature>
<feature type="binding site" evidence="1">
    <location>
        <position position="87"/>
    </location>
    <ligand>
        <name>S-adenosyl-L-methionine</name>
        <dbReference type="ChEBI" id="CHEBI:59789"/>
    </ligand>
</feature>
<feature type="binding site" evidence="1">
    <location>
        <begin position="112"/>
        <end position="113"/>
    </location>
    <ligand>
        <name>S-adenosyl-L-methionine</name>
        <dbReference type="ChEBI" id="CHEBI:59789"/>
    </ligand>
</feature>
<feature type="binding site" evidence="1">
    <location>
        <position position="164"/>
    </location>
    <ligand>
        <name>S-adenosyl-L-methionine</name>
        <dbReference type="ChEBI" id="CHEBI:59789"/>
    </ligand>
</feature>
<feature type="binding site" evidence="1">
    <location>
        <position position="207"/>
    </location>
    <ligand>
        <name>S-adenosyl-L-methionine</name>
        <dbReference type="ChEBI" id="CHEBI:59789"/>
    </ligand>
</feature>
<feature type="binding site" evidence="1">
    <location>
        <position position="232"/>
    </location>
    <ligand>
        <name>S-adenosyl-L-methionine</name>
        <dbReference type="ChEBI" id="CHEBI:59789"/>
    </ligand>
</feature>
<sequence>MLYIIGLGLYDENDISIKGLRAIEDCDEVYAEFYTAMLQGSSLSAIERRIGRSVKVLGRGEIEEERIPIERALELDVALLVAGDPLVATTHTELLIDAHRRGIETRVIHSSSIISAAPGLAGLQAYKFGRIITIPFTSDNYFPTSPYTNIGENLKAGSHSLVLLDIEAHRNRYMTATEGLRYLLKASEKLDDGTISGETLAVVIARAGSEKPLVRADKIATLVEEDFGDPLHCLVVPAGLHFIEADYLVEIAGAPRAVVERMIL</sequence>
<name>DPHB_METTH</name>
<evidence type="ECO:0000255" key="1">
    <source>
        <dbReference type="HAMAP-Rule" id="MF_01084"/>
    </source>
</evidence>
<protein>
    <recommendedName>
        <fullName evidence="1">Diphthine synthase</fullName>
        <ecNumber evidence="1">2.1.1.98</ecNumber>
    </recommendedName>
    <alternativeName>
        <fullName evidence="1">Diphthamide biosynthesis methyltransferase</fullName>
    </alternativeName>
</protein>
<dbReference type="EC" id="2.1.1.98" evidence="1"/>
<dbReference type="EMBL" id="AE000666">
    <property type="protein sequence ID" value="AAB86340.1"/>
    <property type="molecule type" value="Genomic_DNA"/>
</dbReference>
<dbReference type="PIR" id="G69117">
    <property type="entry name" value="G69117"/>
</dbReference>
<dbReference type="RefSeq" id="WP_010877476.1">
    <property type="nucleotide sequence ID" value="NC_000916.1"/>
</dbReference>
<dbReference type="SMR" id="O27902"/>
<dbReference type="FunCoup" id="O27902">
    <property type="interactions" value="180"/>
</dbReference>
<dbReference type="STRING" id="187420.MTH_1874"/>
<dbReference type="PaxDb" id="187420-MTH_1874"/>
<dbReference type="EnsemblBacteria" id="AAB86340">
    <property type="protein sequence ID" value="AAB86340"/>
    <property type="gene ID" value="MTH_1874"/>
</dbReference>
<dbReference type="GeneID" id="1470959"/>
<dbReference type="KEGG" id="mth:MTH_1874"/>
<dbReference type="PATRIC" id="fig|187420.15.peg.1829"/>
<dbReference type="HOGENOM" id="CLU_066040_0_0_2"/>
<dbReference type="InParanoid" id="O27902"/>
<dbReference type="UniPathway" id="UPA00559"/>
<dbReference type="Proteomes" id="UP000005223">
    <property type="component" value="Chromosome"/>
</dbReference>
<dbReference type="GO" id="GO:0004164">
    <property type="term" value="F:diphthine synthase activity"/>
    <property type="evidence" value="ECO:0007669"/>
    <property type="project" value="UniProtKB-UniRule"/>
</dbReference>
<dbReference type="GO" id="GO:0032259">
    <property type="term" value="P:methylation"/>
    <property type="evidence" value="ECO:0007669"/>
    <property type="project" value="UniProtKB-KW"/>
</dbReference>
<dbReference type="GO" id="GO:0017183">
    <property type="term" value="P:protein histidyl modification to diphthamide"/>
    <property type="evidence" value="ECO:0007669"/>
    <property type="project" value="UniProtKB-UniRule"/>
</dbReference>
<dbReference type="CDD" id="cd11647">
    <property type="entry name" value="DHP5_DphB"/>
    <property type="match status" value="1"/>
</dbReference>
<dbReference type="Gene3D" id="3.40.1010.10">
    <property type="entry name" value="Cobalt-precorrin-4 Transmethylase, Domain 1"/>
    <property type="match status" value="1"/>
</dbReference>
<dbReference type="Gene3D" id="3.30.950.10">
    <property type="entry name" value="Methyltransferase, Cobalt-precorrin-4 Transmethylase, Domain 2"/>
    <property type="match status" value="1"/>
</dbReference>
<dbReference type="HAMAP" id="MF_01084">
    <property type="entry name" value="Diphthine_synth"/>
    <property type="match status" value="1"/>
</dbReference>
<dbReference type="InterPro" id="IPR000878">
    <property type="entry name" value="4pyrrol_Mease"/>
</dbReference>
<dbReference type="InterPro" id="IPR035996">
    <property type="entry name" value="4pyrrol_Methylase_sf"/>
</dbReference>
<dbReference type="InterPro" id="IPR014777">
    <property type="entry name" value="4pyrrole_Mease_sub1"/>
</dbReference>
<dbReference type="InterPro" id="IPR014776">
    <property type="entry name" value="4pyrrole_Mease_sub2"/>
</dbReference>
<dbReference type="InterPro" id="IPR004551">
    <property type="entry name" value="Dphthn_synthase"/>
</dbReference>
<dbReference type="NCBIfam" id="TIGR00522">
    <property type="entry name" value="dph5"/>
    <property type="match status" value="1"/>
</dbReference>
<dbReference type="PANTHER" id="PTHR10882:SF0">
    <property type="entry name" value="DIPHTHINE METHYL ESTER SYNTHASE"/>
    <property type="match status" value="1"/>
</dbReference>
<dbReference type="PANTHER" id="PTHR10882">
    <property type="entry name" value="DIPHTHINE SYNTHASE"/>
    <property type="match status" value="1"/>
</dbReference>
<dbReference type="Pfam" id="PF00590">
    <property type="entry name" value="TP_methylase"/>
    <property type="match status" value="1"/>
</dbReference>
<dbReference type="PIRSF" id="PIRSF036432">
    <property type="entry name" value="Diphthine_synth"/>
    <property type="match status" value="1"/>
</dbReference>
<dbReference type="SUPFAM" id="SSF53790">
    <property type="entry name" value="Tetrapyrrole methylase"/>
    <property type="match status" value="1"/>
</dbReference>
<gene>
    <name evidence="1" type="primary">dphB</name>
    <name type="ordered locus">MTH_1874</name>
</gene>
<organism>
    <name type="scientific">Methanothermobacter thermautotrophicus (strain ATCC 29096 / DSM 1053 / JCM 10044 / NBRC 100330 / Delta H)</name>
    <name type="common">Methanobacterium thermoautotrophicum</name>
    <dbReference type="NCBI Taxonomy" id="187420"/>
    <lineage>
        <taxon>Archaea</taxon>
        <taxon>Methanobacteriati</taxon>
        <taxon>Methanobacteriota</taxon>
        <taxon>Methanomada group</taxon>
        <taxon>Methanobacteria</taxon>
        <taxon>Methanobacteriales</taxon>
        <taxon>Methanobacteriaceae</taxon>
        <taxon>Methanothermobacter</taxon>
    </lineage>
</organism>
<comment type="function">
    <text evidence="1">S-adenosyl-L-methionine-dependent methyltransferase that catalyzes the trimethylation of the amino group of the modified target histidine residue in translation elongation factor 2 (EF-2), to form an intermediate called diphthine. The three successive methylation reactions represent the second step of diphthamide biosynthesis.</text>
</comment>
<comment type="catalytic activity">
    <reaction evidence="1">
        <text>2-[(3S)-amino-3-carboxypropyl]-L-histidyl-[translation elongation factor 2] + 3 S-adenosyl-L-methionine = diphthine-[translation elongation factor 2] + 3 S-adenosyl-L-homocysteine + 3 H(+)</text>
        <dbReference type="Rhea" id="RHEA:36415"/>
        <dbReference type="Rhea" id="RHEA-COMP:9749"/>
        <dbReference type="Rhea" id="RHEA-COMP:10172"/>
        <dbReference type="ChEBI" id="CHEBI:15378"/>
        <dbReference type="ChEBI" id="CHEBI:57856"/>
        <dbReference type="ChEBI" id="CHEBI:59789"/>
        <dbReference type="ChEBI" id="CHEBI:73995"/>
        <dbReference type="ChEBI" id="CHEBI:82696"/>
        <dbReference type="EC" id="2.1.1.98"/>
    </reaction>
</comment>
<comment type="pathway">
    <text evidence="1">Protein modification; peptidyl-diphthamide biosynthesis.</text>
</comment>
<comment type="subunit">
    <text evidence="1">Homodimer.</text>
</comment>
<comment type="similarity">
    <text evidence="1">Belongs to the diphthine synthase family.</text>
</comment>
<reference key="1">
    <citation type="journal article" date="1997" name="J. Bacteriol.">
        <title>Complete genome sequence of Methanobacterium thermoautotrophicum deltaH: functional analysis and comparative genomics.</title>
        <authorList>
            <person name="Smith D.R."/>
            <person name="Doucette-Stamm L.A."/>
            <person name="Deloughery C."/>
            <person name="Lee H.-M."/>
            <person name="Dubois J."/>
            <person name="Aldredge T."/>
            <person name="Bashirzadeh R."/>
            <person name="Blakely D."/>
            <person name="Cook R."/>
            <person name="Gilbert K."/>
            <person name="Harrison D."/>
            <person name="Hoang L."/>
            <person name="Keagle P."/>
            <person name="Lumm W."/>
            <person name="Pothier B."/>
            <person name="Qiu D."/>
            <person name="Spadafora R."/>
            <person name="Vicare R."/>
            <person name="Wang Y."/>
            <person name="Wierzbowski J."/>
            <person name="Gibson R."/>
            <person name="Jiwani N."/>
            <person name="Caruso A."/>
            <person name="Bush D."/>
            <person name="Safer H."/>
            <person name="Patwell D."/>
            <person name="Prabhakar S."/>
            <person name="McDougall S."/>
            <person name="Shimer G."/>
            <person name="Goyal A."/>
            <person name="Pietrovski S."/>
            <person name="Church G.M."/>
            <person name="Daniels C.J."/>
            <person name="Mao J.-I."/>
            <person name="Rice P."/>
            <person name="Noelling J."/>
            <person name="Reeve J.N."/>
        </authorList>
    </citation>
    <scope>NUCLEOTIDE SEQUENCE [LARGE SCALE GENOMIC DNA]</scope>
    <source>
        <strain>ATCC 29096 / DSM 1053 / JCM 10044 / NBRC 100330 / Delta H</strain>
    </source>
</reference>